<accession>Q9P9T1</accession>
<feature type="chain" id="PRO_0000220278" description="Uncharacterized protein XF_1585/XF_1690">
    <location>
        <begin position="1"/>
        <end position="140"/>
    </location>
</feature>
<dbReference type="EMBL" id="AE003849">
    <property type="protein sequence ID" value="AAF84394.1"/>
    <property type="molecule type" value="Genomic_DNA"/>
</dbReference>
<dbReference type="EMBL" id="AE003849">
    <property type="protein sequence ID" value="AAF84499.1"/>
    <property type="molecule type" value="Genomic_DNA"/>
</dbReference>
<dbReference type="PIR" id="H82651">
    <property type="entry name" value="H82651"/>
</dbReference>
<dbReference type="RefSeq" id="WP_010894082.1">
    <property type="nucleotide sequence ID" value="NC_002488.3"/>
</dbReference>
<dbReference type="STRING" id="160492.XF_1585"/>
<dbReference type="KEGG" id="xfa:XF_1585"/>
<dbReference type="KEGG" id="xfa:XF_1690"/>
<dbReference type="PATRIC" id="fig|160492.11.peg.1787"/>
<dbReference type="eggNOG" id="ENOG503369R">
    <property type="taxonomic scope" value="Bacteria"/>
</dbReference>
<dbReference type="HOGENOM" id="CLU_1834403_0_0_6"/>
<dbReference type="Proteomes" id="UP000000812">
    <property type="component" value="Chromosome"/>
</dbReference>
<dbReference type="InterPro" id="IPR020351">
    <property type="entry name" value="Phage_TAC_9"/>
</dbReference>
<dbReference type="Pfam" id="PF10876">
    <property type="entry name" value="Phage_TAC_9"/>
    <property type="match status" value="1"/>
</dbReference>
<gene>
    <name type="ordered locus">XF_1585</name>
</gene>
<gene>
    <name type="ordered locus">XF_1690</name>
</gene>
<name>Y1585_XYLFA</name>
<protein>
    <recommendedName>
        <fullName>Uncharacterized protein XF_1585/XF_1690</fullName>
    </recommendedName>
</protein>
<organism>
    <name type="scientific">Xylella fastidiosa (strain 9a5c)</name>
    <dbReference type="NCBI Taxonomy" id="160492"/>
    <lineage>
        <taxon>Bacteria</taxon>
        <taxon>Pseudomonadati</taxon>
        <taxon>Pseudomonadota</taxon>
        <taxon>Gammaproteobacteria</taxon>
        <taxon>Lysobacterales</taxon>
        <taxon>Lysobacteraceae</taxon>
        <taxon>Xylella</taxon>
    </lineage>
</organism>
<reference key="1">
    <citation type="journal article" date="2000" name="Nature">
        <title>The genome sequence of the plant pathogen Xylella fastidiosa.</title>
        <authorList>
            <person name="Simpson A.J.G."/>
            <person name="Reinach F.C."/>
            <person name="Arruda P."/>
            <person name="Abreu F.A."/>
            <person name="Acencio M."/>
            <person name="Alvarenga R."/>
            <person name="Alves L.M.C."/>
            <person name="Araya J.E."/>
            <person name="Baia G.S."/>
            <person name="Baptista C.S."/>
            <person name="Barros M.H."/>
            <person name="Bonaccorsi E.D."/>
            <person name="Bordin S."/>
            <person name="Bove J.M."/>
            <person name="Briones M.R.S."/>
            <person name="Bueno M.R.P."/>
            <person name="Camargo A.A."/>
            <person name="Camargo L.E.A."/>
            <person name="Carraro D.M."/>
            <person name="Carrer H."/>
            <person name="Colauto N.B."/>
            <person name="Colombo C."/>
            <person name="Costa F.F."/>
            <person name="Costa M.C.R."/>
            <person name="Costa-Neto C.M."/>
            <person name="Coutinho L.L."/>
            <person name="Cristofani M."/>
            <person name="Dias-Neto E."/>
            <person name="Docena C."/>
            <person name="El-Dorry H."/>
            <person name="Facincani A.P."/>
            <person name="Ferreira A.J.S."/>
            <person name="Ferreira V.C.A."/>
            <person name="Ferro J.A."/>
            <person name="Fraga J.S."/>
            <person name="Franca S.C."/>
            <person name="Franco M.C."/>
            <person name="Frohme M."/>
            <person name="Furlan L.R."/>
            <person name="Garnier M."/>
            <person name="Goldman G.H."/>
            <person name="Goldman M.H.S."/>
            <person name="Gomes S.L."/>
            <person name="Gruber A."/>
            <person name="Ho P.L."/>
            <person name="Hoheisel J.D."/>
            <person name="Junqueira M.L."/>
            <person name="Kemper E.L."/>
            <person name="Kitajima J.P."/>
            <person name="Krieger J.E."/>
            <person name="Kuramae E.E."/>
            <person name="Laigret F."/>
            <person name="Lambais M.R."/>
            <person name="Leite L.C.C."/>
            <person name="Lemos E.G.M."/>
            <person name="Lemos M.V.F."/>
            <person name="Lopes S.A."/>
            <person name="Lopes C.R."/>
            <person name="Machado J.A."/>
            <person name="Machado M.A."/>
            <person name="Madeira A.M.B.N."/>
            <person name="Madeira H.M.F."/>
            <person name="Marino C.L."/>
            <person name="Marques M.V."/>
            <person name="Martins E.A.L."/>
            <person name="Martins E.M.F."/>
            <person name="Matsukuma A.Y."/>
            <person name="Menck C.F.M."/>
            <person name="Miracca E.C."/>
            <person name="Miyaki C.Y."/>
            <person name="Monteiro-Vitorello C.B."/>
            <person name="Moon D.H."/>
            <person name="Nagai M.A."/>
            <person name="Nascimento A.L.T.O."/>
            <person name="Netto L.E.S."/>
            <person name="Nhani A. Jr."/>
            <person name="Nobrega F.G."/>
            <person name="Nunes L.R."/>
            <person name="Oliveira M.A."/>
            <person name="de Oliveira M.C."/>
            <person name="de Oliveira R.C."/>
            <person name="Palmieri D.A."/>
            <person name="Paris A."/>
            <person name="Peixoto B.R."/>
            <person name="Pereira G.A.G."/>
            <person name="Pereira H.A. Jr."/>
            <person name="Pesquero J.B."/>
            <person name="Quaggio R.B."/>
            <person name="Roberto P.G."/>
            <person name="Rodrigues V."/>
            <person name="de Rosa A.J.M."/>
            <person name="de Rosa V.E. Jr."/>
            <person name="de Sa R.G."/>
            <person name="Santelli R.V."/>
            <person name="Sawasaki H.E."/>
            <person name="da Silva A.C.R."/>
            <person name="da Silva A.M."/>
            <person name="da Silva F.R."/>
            <person name="Silva W.A. Jr."/>
            <person name="da Silveira J.F."/>
            <person name="Silvestri M.L.Z."/>
            <person name="Siqueira W.J."/>
            <person name="de Souza A.A."/>
            <person name="de Souza A.P."/>
            <person name="Terenzi M.F."/>
            <person name="Truffi D."/>
            <person name="Tsai S.M."/>
            <person name="Tsuhako M.H."/>
            <person name="Vallada H."/>
            <person name="Van Sluys M.A."/>
            <person name="Verjovski-Almeida S."/>
            <person name="Vettore A.L."/>
            <person name="Zago M.A."/>
            <person name="Zatz M."/>
            <person name="Meidanis J."/>
            <person name="Setubal J.C."/>
        </authorList>
    </citation>
    <scope>NUCLEOTIDE SEQUENCE [LARGE SCALE GENOMIC DNA]</scope>
    <source>
        <strain>9a5c</strain>
    </source>
</reference>
<sequence length="140" mass="15428">MNNEHRFEIEGLTYVMTPANAMAAWQSLKRAGVLLRGMDADALANAQGAASVALGTLLSHLGDPAVTEIEALVFEQTAIKTPEGTTYRLSPDRLNEHFNTRRTHLLRVLMEGVKYQYSDFFVGGMAAFQDLIPMPSAEQE</sequence>
<proteinExistence type="predicted"/>